<protein>
    <recommendedName>
        <fullName evidence="2">D-alanine--D-alanine ligase</fullName>
        <ecNumber evidence="2">6.3.2.4</ecNumber>
    </recommendedName>
    <alternativeName>
        <fullName evidence="2">D-Ala-D-Ala ligase</fullName>
    </alternativeName>
    <alternativeName>
        <fullName evidence="2">D-alanylalanine synthetase</fullName>
    </alternativeName>
</protein>
<name>DDL_JANMA</name>
<proteinExistence type="inferred from homology"/>
<dbReference type="EC" id="6.3.2.4" evidence="2"/>
<dbReference type="EMBL" id="CP000269">
    <property type="protein sequence ID" value="ABR89041.1"/>
    <property type="molecule type" value="Genomic_DNA"/>
</dbReference>
<dbReference type="RefSeq" id="WP_012080862.1">
    <property type="nucleotide sequence ID" value="NC_009659.1"/>
</dbReference>
<dbReference type="SMR" id="A6T2F6"/>
<dbReference type="STRING" id="375286.mma_3013"/>
<dbReference type="KEGG" id="mms:mma_3013"/>
<dbReference type="eggNOG" id="COG1181">
    <property type="taxonomic scope" value="Bacteria"/>
</dbReference>
<dbReference type="HOGENOM" id="CLU_039268_1_2_4"/>
<dbReference type="OrthoDB" id="9813261at2"/>
<dbReference type="UniPathway" id="UPA00219"/>
<dbReference type="Proteomes" id="UP000006388">
    <property type="component" value="Chromosome"/>
</dbReference>
<dbReference type="GO" id="GO:0005829">
    <property type="term" value="C:cytosol"/>
    <property type="evidence" value="ECO:0007669"/>
    <property type="project" value="TreeGrafter"/>
</dbReference>
<dbReference type="GO" id="GO:0005524">
    <property type="term" value="F:ATP binding"/>
    <property type="evidence" value="ECO:0007669"/>
    <property type="project" value="UniProtKB-KW"/>
</dbReference>
<dbReference type="GO" id="GO:0008716">
    <property type="term" value="F:D-alanine-D-alanine ligase activity"/>
    <property type="evidence" value="ECO:0007669"/>
    <property type="project" value="UniProtKB-UniRule"/>
</dbReference>
<dbReference type="GO" id="GO:0046872">
    <property type="term" value="F:metal ion binding"/>
    <property type="evidence" value="ECO:0007669"/>
    <property type="project" value="UniProtKB-KW"/>
</dbReference>
<dbReference type="GO" id="GO:0071555">
    <property type="term" value="P:cell wall organization"/>
    <property type="evidence" value="ECO:0007669"/>
    <property type="project" value="UniProtKB-KW"/>
</dbReference>
<dbReference type="GO" id="GO:0009252">
    <property type="term" value="P:peptidoglycan biosynthetic process"/>
    <property type="evidence" value="ECO:0007669"/>
    <property type="project" value="UniProtKB-UniRule"/>
</dbReference>
<dbReference type="GO" id="GO:0008360">
    <property type="term" value="P:regulation of cell shape"/>
    <property type="evidence" value="ECO:0007669"/>
    <property type="project" value="UniProtKB-KW"/>
</dbReference>
<dbReference type="FunFam" id="3.30.470.20:FF:000008">
    <property type="entry name" value="D-alanine--D-alanine ligase"/>
    <property type="match status" value="1"/>
</dbReference>
<dbReference type="FunFam" id="3.40.50.20:FF:000013">
    <property type="entry name" value="D-alanine--D-alanine ligase"/>
    <property type="match status" value="1"/>
</dbReference>
<dbReference type="Gene3D" id="3.40.50.20">
    <property type="match status" value="1"/>
</dbReference>
<dbReference type="Gene3D" id="3.30.1490.20">
    <property type="entry name" value="ATP-grasp fold, A domain"/>
    <property type="match status" value="1"/>
</dbReference>
<dbReference type="Gene3D" id="3.30.470.20">
    <property type="entry name" value="ATP-grasp fold, B domain"/>
    <property type="match status" value="1"/>
</dbReference>
<dbReference type="HAMAP" id="MF_00047">
    <property type="entry name" value="Dala_Dala_lig"/>
    <property type="match status" value="1"/>
</dbReference>
<dbReference type="InterPro" id="IPR011761">
    <property type="entry name" value="ATP-grasp"/>
</dbReference>
<dbReference type="InterPro" id="IPR013815">
    <property type="entry name" value="ATP_grasp_subdomain_1"/>
</dbReference>
<dbReference type="InterPro" id="IPR000291">
    <property type="entry name" value="D-Ala_lig_Van_CS"/>
</dbReference>
<dbReference type="InterPro" id="IPR005905">
    <property type="entry name" value="D_ala_D_ala"/>
</dbReference>
<dbReference type="InterPro" id="IPR011095">
    <property type="entry name" value="Dala_Dala_lig_C"/>
</dbReference>
<dbReference type="InterPro" id="IPR011127">
    <property type="entry name" value="Dala_Dala_lig_N"/>
</dbReference>
<dbReference type="InterPro" id="IPR016185">
    <property type="entry name" value="PreATP-grasp_dom_sf"/>
</dbReference>
<dbReference type="NCBIfam" id="TIGR01205">
    <property type="entry name" value="D_ala_D_alaTIGR"/>
    <property type="match status" value="1"/>
</dbReference>
<dbReference type="NCBIfam" id="NF002378">
    <property type="entry name" value="PRK01372.1"/>
    <property type="match status" value="1"/>
</dbReference>
<dbReference type="PANTHER" id="PTHR23132">
    <property type="entry name" value="D-ALANINE--D-ALANINE LIGASE"/>
    <property type="match status" value="1"/>
</dbReference>
<dbReference type="PANTHER" id="PTHR23132:SF23">
    <property type="entry name" value="D-ALANINE--D-ALANINE LIGASE B"/>
    <property type="match status" value="1"/>
</dbReference>
<dbReference type="Pfam" id="PF07478">
    <property type="entry name" value="Dala_Dala_lig_C"/>
    <property type="match status" value="1"/>
</dbReference>
<dbReference type="Pfam" id="PF01820">
    <property type="entry name" value="Dala_Dala_lig_N"/>
    <property type="match status" value="1"/>
</dbReference>
<dbReference type="PIRSF" id="PIRSF039102">
    <property type="entry name" value="Ddl/VanB"/>
    <property type="match status" value="1"/>
</dbReference>
<dbReference type="SMART" id="SM01209">
    <property type="entry name" value="GARS_A"/>
    <property type="match status" value="1"/>
</dbReference>
<dbReference type="SUPFAM" id="SSF56059">
    <property type="entry name" value="Glutathione synthetase ATP-binding domain-like"/>
    <property type="match status" value="1"/>
</dbReference>
<dbReference type="SUPFAM" id="SSF52440">
    <property type="entry name" value="PreATP-grasp domain"/>
    <property type="match status" value="1"/>
</dbReference>
<dbReference type="PROSITE" id="PS50975">
    <property type="entry name" value="ATP_GRASP"/>
    <property type="match status" value="1"/>
</dbReference>
<dbReference type="PROSITE" id="PS00843">
    <property type="entry name" value="DALA_DALA_LIGASE_1"/>
    <property type="match status" value="1"/>
</dbReference>
<dbReference type="PROSITE" id="PS00844">
    <property type="entry name" value="DALA_DALA_LIGASE_2"/>
    <property type="match status" value="1"/>
</dbReference>
<organism>
    <name type="scientific">Janthinobacterium sp. (strain Marseille)</name>
    <name type="common">Minibacterium massiliensis</name>
    <dbReference type="NCBI Taxonomy" id="375286"/>
    <lineage>
        <taxon>Bacteria</taxon>
        <taxon>Pseudomonadati</taxon>
        <taxon>Pseudomonadota</taxon>
        <taxon>Betaproteobacteria</taxon>
        <taxon>Burkholderiales</taxon>
        <taxon>Oxalobacteraceae</taxon>
        <taxon>Janthinobacterium</taxon>
    </lineage>
</organism>
<feature type="chain" id="PRO_1000057323" description="D-alanine--D-alanine ligase">
    <location>
        <begin position="1"/>
        <end position="320"/>
    </location>
</feature>
<feature type="domain" description="ATP-grasp" evidence="2">
    <location>
        <begin position="104"/>
        <end position="308"/>
    </location>
</feature>
<feature type="binding site" evidence="2">
    <location>
        <begin position="134"/>
        <end position="189"/>
    </location>
    <ligand>
        <name>ATP</name>
        <dbReference type="ChEBI" id="CHEBI:30616"/>
    </ligand>
</feature>
<feature type="binding site" evidence="2">
    <location>
        <position position="261"/>
    </location>
    <ligand>
        <name>Mg(2+)</name>
        <dbReference type="ChEBI" id="CHEBI:18420"/>
        <label>1</label>
    </ligand>
</feature>
<feature type="binding site" evidence="2">
    <location>
        <position position="275"/>
    </location>
    <ligand>
        <name>Mg(2+)</name>
        <dbReference type="ChEBI" id="CHEBI:18420"/>
        <label>1</label>
    </ligand>
</feature>
<feature type="binding site" evidence="2">
    <location>
        <position position="275"/>
    </location>
    <ligand>
        <name>Mg(2+)</name>
        <dbReference type="ChEBI" id="CHEBI:18420"/>
        <label>2</label>
    </ligand>
</feature>
<feature type="binding site" evidence="2">
    <location>
        <position position="277"/>
    </location>
    <ligand>
        <name>Mg(2+)</name>
        <dbReference type="ChEBI" id="CHEBI:18420"/>
        <label>2</label>
    </ligand>
</feature>
<comment type="function">
    <text evidence="2">Cell wall formation.</text>
</comment>
<comment type="catalytic activity">
    <reaction evidence="2">
        <text>2 D-alanine + ATP = D-alanyl-D-alanine + ADP + phosphate + H(+)</text>
        <dbReference type="Rhea" id="RHEA:11224"/>
        <dbReference type="ChEBI" id="CHEBI:15378"/>
        <dbReference type="ChEBI" id="CHEBI:30616"/>
        <dbReference type="ChEBI" id="CHEBI:43474"/>
        <dbReference type="ChEBI" id="CHEBI:57416"/>
        <dbReference type="ChEBI" id="CHEBI:57822"/>
        <dbReference type="ChEBI" id="CHEBI:456216"/>
        <dbReference type="EC" id="6.3.2.4"/>
    </reaction>
</comment>
<comment type="cofactor">
    <cofactor evidence="1">
        <name>Mg(2+)</name>
        <dbReference type="ChEBI" id="CHEBI:18420"/>
    </cofactor>
    <cofactor evidence="1">
        <name>Mn(2+)</name>
        <dbReference type="ChEBI" id="CHEBI:29035"/>
    </cofactor>
    <text evidence="1">Binds 2 magnesium or manganese ions per subunit.</text>
</comment>
<comment type="pathway">
    <text evidence="2">Cell wall biogenesis; peptidoglycan biosynthesis.</text>
</comment>
<comment type="subcellular location">
    <subcellularLocation>
        <location evidence="2">Cytoplasm</location>
    </subcellularLocation>
</comment>
<comment type="similarity">
    <text evidence="2">Belongs to the D-alanine--D-alanine ligase family.</text>
</comment>
<keyword id="KW-0067">ATP-binding</keyword>
<keyword id="KW-0133">Cell shape</keyword>
<keyword id="KW-0961">Cell wall biogenesis/degradation</keyword>
<keyword id="KW-0963">Cytoplasm</keyword>
<keyword id="KW-0436">Ligase</keyword>
<keyword id="KW-0460">Magnesium</keyword>
<keyword id="KW-0464">Manganese</keyword>
<keyword id="KW-0479">Metal-binding</keyword>
<keyword id="KW-0547">Nucleotide-binding</keyword>
<keyword id="KW-0573">Peptidoglycan synthesis</keyword>
<evidence type="ECO:0000250" key="1"/>
<evidence type="ECO:0000255" key="2">
    <source>
        <dbReference type="HAMAP-Rule" id="MF_00047"/>
    </source>
</evidence>
<accession>A6T2F6</accession>
<gene>
    <name evidence="2" type="primary">ddl</name>
    <name type="ordered locus">mma_3013</name>
</gene>
<sequence length="320" mass="34332">MKKEFGKVGVLFGGRSAEREVSLMSGKGVLAALLSKGIDAHPFDPAERSLAELAAEKFDRVFIALHGRFGEDGSLQGALEQLGIPYTGPGVMASAIAMDKVITKRVCLSHGVPTPKFTALEVEATTAEQLQAIAAEFGMPLMLKAPHEGSTIGIAKVETAEGMQAGFDLCAKYDDVVLVEQFVKGRELTVPVLGSGRNARALPIVEIIAPQGNYDYEHKYFSDDTQYLCPAPFDAAFTKRVQALAVSAFNAVGCTGWARVDFLVRESDNEPFLLEINTSPGMTGHSLVPMSAKVAGTAYEDLCVEILRMAKLGLKPVQHK</sequence>
<reference key="1">
    <citation type="journal article" date="2007" name="PLoS Genet.">
        <title>Genome analysis of Minibacterium massiliensis highlights the convergent evolution of water-living bacteria.</title>
        <authorList>
            <person name="Audic S."/>
            <person name="Robert C."/>
            <person name="Campagna B."/>
            <person name="Parinello H."/>
            <person name="Claverie J.-M."/>
            <person name="Raoult D."/>
            <person name="Drancourt M."/>
        </authorList>
    </citation>
    <scope>NUCLEOTIDE SEQUENCE [LARGE SCALE GENOMIC DNA]</scope>
    <source>
        <strain>Marseille</strain>
    </source>
</reference>